<evidence type="ECO:0000255" key="1">
    <source>
        <dbReference type="HAMAP-Rule" id="MF_00034"/>
    </source>
</evidence>
<evidence type="ECO:0000256" key="2">
    <source>
        <dbReference type="SAM" id="MobiDB-lite"/>
    </source>
</evidence>
<evidence type="ECO:0000305" key="3"/>
<evidence type="ECO:0000312" key="4">
    <source>
        <dbReference type="EMBL" id="AAK19838.1"/>
    </source>
</evidence>
<evidence type="ECO:0000312" key="5">
    <source>
        <dbReference type="EMBL" id="BAB99055.1"/>
    </source>
</evidence>
<evidence type="ECO:0000312" key="6">
    <source>
        <dbReference type="EMBL" id="CAF20044.1"/>
    </source>
</evidence>
<comment type="function">
    <text evidence="1">The RuvA-RuvB-RuvC complex processes Holliday junction (HJ) DNA during genetic recombination and DNA repair. Endonuclease that resolves HJ intermediates. Cleaves cruciform DNA by making single-stranded nicks across the HJ at symmetrical positions within the homologous arms, yielding a 5'-phosphate and a 3'-hydroxyl group; requires a central core of homology in the junction. The consensus cleavage sequence is 5'-(A/T)TT(C/G)-3'. Cleavage occurs on the 3'-side of the TT dinucleotide at the point of strand exchange. HJ branch migration catalyzed by RuvA-RuvB allows RuvC to scan DNA until it finds its consensus sequence, where it cleaves and resolves the cruciform DNA.</text>
</comment>
<comment type="catalytic activity">
    <reaction evidence="1">
        <text>Endonucleolytic cleavage at a junction such as a reciprocal single-stranded crossover between two homologous DNA duplexes (Holliday junction).</text>
        <dbReference type="EC" id="3.1.21.10"/>
    </reaction>
</comment>
<comment type="cofactor">
    <cofactor evidence="1">
        <name>Mg(2+)</name>
        <dbReference type="ChEBI" id="CHEBI:18420"/>
    </cofactor>
    <text evidence="1">Binds 2 Mg(2+) ion per subunit.</text>
</comment>
<comment type="subunit">
    <text evidence="1">Homodimer which binds Holliday junction (HJ) DNA. The HJ becomes 2-fold symmetrical on binding to RuvC with unstacked arms; it has a different conformation from HJ DNA in complex with RuvA. In the full resolvosome a probable DNA-RuvA(4)-RuvB(12)-RuvC(2) complex forms which resolves the HJ.</text>
</comment>
<comment type="subcellular location">
    <subcellularLocation>
        <location evidence="1">Cytoplasm</location>
    </subcellularLocation>
</comment>
<comment type="similarity">
    <text evidence="1">Belongs to the RuvC family.</text>
</comment>
<comment type="sequence caution" evidence="3">
    <conflict type="erroneous initiation">
        <sequence resource="EMBL-CDS" id="CAF20044"/>
    </conflict>
    <text>Extended N-terminus.</text>
</comment>
<proteinExistence type="inferred from homology"/>
<organism>
    <name type="scientific">Corynebacterium glutamicum (strain ATCC 13032 / DSM 20300 / JCM 1318 / BCRC 11384 / CCUG 27702 / LMG 3730 / NBRC 12168 / NCIMB 10025 / NRRL B-2784 / 534)</name>
    <dbReference type="NCBI Taxonomy" id="196627"/>
    <lineage>
        <taxon>Bacteria</taxon>
        <taxon>Bacillati</taxon>
        <taxon>Actinomycetota</taxon>
        <taxon>Actinomycetes</taxon>
        <taxon>Mycobacteriales</taxon>
        <taxon>Corynebacteriaceae</taxon>
        <taxon>Corynebacterium</taxon>
    </lineage>
</organism>
<name>RUVC_CORGL</name>
<keyword id="KW-0963">Cytoplasm</keyword>
<keyword id="KW-0227">DNA damage</keyword>
<keyword id="KW-0233">DNA recombination</keyword>
<keyword id="KW-0234">DNA repair</keyword>
<keyword id="KW-0238">DNA-binding</keyword>
<keyword id="KW-0255">Endonuclease</keyword>
<keyword id="KW-0378">Hydrolase</keyword>
<keyword id="KW-0460">Magnesium</keyword>
<keyword id="KW-0479">Metal-binding</keyword>
<keyword id="KW-0540">Nuclease</keyword>
<keyword id="KW-1185">Reference proteome</keyword>
<gene>
    <name evidence="1" type="primary">ruvC</name>
    <name type="ordered locus">Cgl1662</name>
    <name type="ordered locus">cg1871</name>
</gene>
<protein>
    <recommendedName>
        <fullName evidence="1">Crossover junction endodeoxyribonuclease RuvC</fullName>
        <ecNumber evidence="1">3.1.21.10</ecNumber>
    </recommendedName>
    <alternativeName>
        <fullName evidence="1">Holliday junction nuclease RuvC</fullName>
    </alternativeName>
    <alternativeName>
        <fullName evidence="1">Holliday junction resolvase RuvC</fullName>
    </alternativeName>
</protein>
<dbReference type="EC" id="3.1.21.10" evidence="1"/>
<dbReference type="EMBL" id="AF038651">
    <property type="protein sequence ID" value="AAK19838.1"/>
    <property type="molecule type" value="Genomic_DNA"/>
</dbReference>
<dbReference type="EMBL" id="BA000036">
    <property type="protein sequence ID" value="BAB99055.1"/>
    <property type="molecule type" value="Genomic_DNA"/>
</dbReference>
<dbReference type="EMBL" id="BX927153">
    <property type="protein sequence ID" value="CAF20044.1"/>
    <property type="status" value="ALT_INIT"/>
    <property type="molecule type" value="Genomic_DNA"/>
</dbReference>
<dbReference type="RefSeq" id="NP_600874.2">
    <property type="nucleotide sequence ID" value="NC_003450.3"/>
</dbReference>
<dbReference type="RefSeq" id="WP_011014519.1">
    <property type="nucleotide sequence ID" value="NC_006958.1"/>
</dbReference>
<dbReference type="SMR" id="Q9AE11"/>
<dbReference type="STRING" id="196627.cg1871"/>
<dbReference type="GeneID" id="1019629"/>
<dbReference type="KEGG" id="cgb:cg1871"/>
<dbReference type="KEGG" id="cgl:Cgl1662"/>
<dbReference type="PATRIC" id="fig|196627.13.peg.1622"/>
<dbReference type="eggNOG" id="COG0817">
    <property type="taxonomic scope" value="Bacteria"/>
</dbReference>
<dbReference type="HOGENOM" id="CLU_091257_0_0_11"/>
<dbReference type="OrthoDB" id="9805499at2"/>
<dbReference type="BioCyc" id="CORYNE:G18NG-11247-MONOMER"/>
<dbReference type="Proteomes" id="UP000000582">
    <property type="component" value="Chromosome"/>
</dbReference>
<dbReference type="Proteomes" id="UP000001009">
    <property type="component" value="Chromosome"/>
</dbReference>
<dbReference type="GO" id="GO:0005737">
    <property type="term" value="C:cytoplasm"/>
    <property type="evidence" value="ECO:0007669"/>
    <property type="project" value="UniProtKB-SubCell"/>
</dbReference>
<dbReference type="GO" id="GO:0048476">
    <property type="term" value="C:Holliday junction resolvase complex"/>
    <property type="evidence" value="ECO:0007669"/>
    <property type="project" value="UniProtKB-UniRule"/>
</dbReference>
<dbReference type="GO" id="GO:0008821">
    <property type="term" value="F:crossover junction DNA endonuclease activity"/>
    <property type="evidence" value="ECO:0007669"/>
    <property type="project" value="UniProtKB-UniRule"/>
</dbReference>
<dbReference type="GO" id="GO:0003677">
    <property type="term" value="F:DNA binding"/>
    <property type="evidence" value="ECO:0007669"/>
    <property type="project" value="UniProtKB-KW"/>
</dbReference>
<dbReference type="GO" id="GO:0000287">
    <property type="term" value="F:magnesium ion binding"/>
    <property type="evidence" value="ECO:0007669"/>
    <property type="project" value="UniProtKB-UniRule"/>
</dbReference>
<dbReference type="GO" id="GO:0006310">
    <property type="term" value="P:DNA recombination"/>
    <property type="evidence" value="ECO:0007669"/>
    <property type="project" value="UniProtKB-UniRule"/>
</dbReference>
<dbReference type="GO" id="GO:0006281">
    <property type="term" value="P:DNA repair"/>
    <property type="evidence" value="ECO:0007669"/>
    <property type="project" value="UniProtKB-UniRule"/>
</dbReference>
<dbReference type="CDD" id="cd16962">
    <property type="entry name" value="RuvC"/>
    <property type="match status" value="1"/>
</dbReference>
<dbReference type="FunFam" id="3.30.420.10:FF:000002">
    <property type="entry name" value="Crossover junction endodeoxyribonuclease RuvC"/>
    <property type="match status" value="1"/>
</dbReference>
<dbReference type="Gene3D" id="3.30.420.10">
    <property type="entry name" value="Ribonuclease H-like superfamily/Ribonuclease H"/>
    <property type="match status" value="1"/>
</dbReference>
<dbReference type="HAMAP" id="MF_00034">
    <property type="entry name" value="RuvC"/>
    <property type="match status" value="1"/>
</dbReference>
<dbReference type="InterPro" id="IPR012337">
    <property type="entry name" value="RNaseH-like_sf"/>
</dbReference>
<dbReference type="InterPro" id="IPR036397">
    <property type="entry name" value="RNaseH_sf"/>
</dbReference>
<dbReference type="InterPro" id="IPR020563">
    <property type="entry name" value="X-over_junc_endoDNase_Mg_BS"/>
</dbReference>
<dbReference type="InterPro" id="IPR002176">
    <property type="entry name" value="X-over_junc_endoDNase_RuvC"/>
</dbReference>
<dbReference type="NCBIfam" id="TIGR00228">
    <property type="entry name" value="ruvC"/>
    <property type="match status" value="1"/>
</dbReference>
<dbReference type="PANTHER" id="PTHR30194">
    <property type="entry name" value="CROSSOVER JUNCTION ENDODEOXYRIBONUCLEASE RUVC"/>
    <property type="match status" value="1"/>
</dbReference>
<dbReference type="PANTHER" id="PTHR30194:SF3">
    <property type="entry name" value="CROSSOVER JUNCTION ENDODEOXYRIBONUCLEASE RUVC"/>
    <property type="match status" value="1"/>
</dbReference>
<dbReference type="Pfam" id="PF02075">
    <property type="entry name" value="RuvC"/>
    <property type="match status" value="1"/>
</dbReference>
<dbReference type="PRINTS" id="PR00696">
    <property type="entry name" value="RSOLVASERUVC"/>
</dbReference>
<dbReference type="SUPFAM" id="SSF53098">
    <property type="entry name" value="Ribonuclease H-like"/>
    <property type="match status" value="1"/>
</dbReference>
<dbReference type="PROSITE" id="PS01321">
    <property type="entry name" value="RUVC"/>
    <property type="match status" value="1"/>
</dbReference>
<accession>Q9AE11</accession>
<feature type="chain" id="PRO_0000183093" description="Crossover junction endodeoxyribonuclease RuvC">
    <location>
        <begin position="1"/>
        <end position="221"/>
    </location>
</feature>
<feature type="region of interest" description="Disordered" evidence="2">
    <location>
        <begin position="169"/>
        <end position="221"/>
    </location>
</feature>
<feature type="compositionally biased region" description="Polar residues" evidence="2">
    <location>
        <begin position="192"/>
        <end position="203"/>
    </location>
</feature>
<feature type="active site" evidence="1">
    <location>
        <position position="12"/>
    </location>
</feature>
<feature type="active site" evidence="1">
    <location>
        <position position="73"/>
    </location>
</feature>
<feature type="active site" evidence="1">
    <location>
        <position position="146"/>
    </location>
</feature>
<feature type="binding site" evidence="1">
    <location>
        <position position="12"/>
    </location>
    <ligand>
        <name>Mg(2+)</name>
        <dbReference type="ChEBI" id="CHEBI:18420"/>
        <label>1</label>
    </ligand>
</feature>
<feature type="binding site" evidence="1">
    <location>
        <position position="73"/>
    </location>
    <ligand>
        <name>Mg(2+)</name>
        <dbReference type="ChEBI" id="CHEBI:18420"/>
        <label>2</label>
    </ligand>
</feature>
<feature type="binding site" evidence="1">
    <location>
        <position position="146"/>
    </location>
    <ligand>
        <name>Mg(2+)</name>
        <dbReference type="ChEBI" id="CHEBI:18420"/>
        <label>1</label>
    </ligand>
</feature>
<reference evidence="4" key="1">
    <citation type="submission" date="2001-02" db="EMBL/GenBank/DDBJ databases">
        <title>The role of Corynebacterium glutamicum secretion genes secD, secF and secG in transporting the Streptomyces griseus alpha-amylase.</title>
        <authorList>
            <person name="Berens S."/>
            <person name="Kalinowski J."/>
            <person name="Puehler A."/>
        </authorList>
    </citation>
    <scope>NUCLEOTIDE SEQUENCE [GENOMIC DNA]</scope>
    <source>
        <strain>ATCC 13032 / DSM 20300 / JCM 1318 / BCRC 11384 / CCUG 27702 / LMG 3730 / NBRC 12168 / NCIMB 10025 / NRRL B-2784 / 534</strain>
    </source>
</reference>
<reference evidence="5" key="2">
    <citation type="journal article" date="2003" name="Appl. Microbiol. Biotechnol.">
        <title>The Corynebacterium glutamicum genome: features and impacts on biotechnological processes.</title>
        <authorList>
            <person name="Ikeda M."/>
            <person name="Nakagawa S."/>
        </authorList>
    </citation>
    <scope>NUCLEOTIDE SEQUENCE [LARGE SCALE GENOMIC DNA]</scope>
    <source>
        <strain>ATCC 13032 / DSM 20300 / JCM 1318 / BCRC 11384 / CCUG 27702 / LMG 3730 / NBRC 12168 / NCIMB 10025 / NRRL B-2784 / 534</strain>
    </source>
</reference>
<reference evidence="6" key="3">
    <citation type="journal article" date="2003" name="J. Biotechnol.">
        <title>The complete Corynebacterium glutamicum ATCC 13032 genome sequence and its impact on the production of L-aspartate-derived amino acids and vitamins.</title>
        <authorList>
            <person name="Kalinowski J."/>
            <person name="Bathe B."/>
            <person name="Bartels D."/>
            <person name="Bischoff N."/>
            <person name="Bott M."/>
            <person name="Burkovski A."/>
            <person name="Dusch N."/>
            <person name="Eggeling L."/>
            <person name="Eikmanns B.J."/>
            <person name="Gaigalat L."/>
            <person name="Goesmann A."/>
            <person name="Hartmann M."/>
            <person name="Huthmacher K."/>
            <person name="Kraemer R."/>
            <person name="Linke B."/>
            <person name="McHardy A.C."/>
            <person name="Meyer F."/>
            <person name="Moeckel B."/>
            <person name="Pfefferle W."/>
            <person name="Puehler A."/>
            <person name="Rey D.A."/>
            <person name="Rueckert C."/>
            <person name="Rupp O."/>
            <person name="Sahm H."/>
            <person name="Wendisch V.F."/>
            <person name="Wiegraebe I."/>
            <person name="Tauch A."/>
        </authorList>
    </citation>
    <scope>NUCLEOTIDE SEQUENCE [LARGE SCALE GENOMIC DNA]</scope>
    <source>
        <strain>ATCC 13032 / DSM 20300 / JCM 1318 / BCRC 11384 / CCUG 27702 / LMG 3730 / NBRC 12168 / NCIMB 10025 / NRRL B-2784 / 534</strain>
    </source>
</reference>
<sequence>MNHEGLRVMGIDPGLTRCGLSVVQAGRGRTVYPVSVGVVRTPPDAELAERLLRLSKAVGEWMDEYTPDVIAIERVFERGNVSTVMNTAHAVGVLILAAAERGLPVHMYTPSEVKKAISGNGRADKKQMTVMITRILGLGEPPKPADAADALSLAVCHCWRAPMLMRAQSQYSEQELEKRRRVQQGKLGKAKSTYNAEQAQSHASDPAKAAHPSQFQRTDTN</sequence>